<proteinExistence type="evidence at protein level"/>
<reference key="1">
    <citation type="journal article" date="2005" name="Science">
        <title>The transcriptional landscape of the mammalian genome.</title>
        <authorList>
            <person name="Carninci P."/>
            <person name="Kasukawa T."/>
            <person name="Katayama S."/>
            <person name="Gough J."/>
            <person name="Frith M.C."/>
            <person name="Maeda N."/>
            <person name="Oyama R."/>
            <person name="Ravasi T."/>
            <person name="Lenhard B."/>
            <person name="Wells C."/>
            <person name="Kodzius R."/>
            <person name="Shimokawa K."/>
            <person name="Bajic V.B."/>
            <person name="Brenner S.E."/>
            <person name="Batalov S."/>
            <person name="Forrest A.R."/>
            <person name="Zavolan M."/>
            <person name="Davis M.J."/>
            <person name="Wilming L.G."/>
            <person name="Aidinis V."/>
            <person name="Allen J.E."/>
            <person name="Ambesi-Impiombato A."/>
            <person name="Apweiler R."/>
            <person name="Aturaliya R.N."/>
            <person name="Bailey T.L."/>
            <person name="Bansal M."/>
            <person name="Baxter L."/>
            <person name="Beisel K.W."/>
            <person name="Bersano T."/>
            <person name="Bono H."/>
            <person name="Chalk A.M."/>
            <person name="Chiu K.P."/>
            <person name="Choudhary V."/>
            <person name="Christoffels A."/>
            <person name="Clutterbuck D.R."/>
            <person name="Crowe M.L."/>
            <person name="Dalla E."/>
            <person name="Dalrymple B.P."/>
            <person name="de Bono B."/>
            <person name="Della Gatta G."/>
            <person name="di Bernardo D."/>
            <person name="Down T."/>
            <person name="Engstrom P."/>
            <person name="Fagiolini M."/>
            <person name="Faulkner G."/>
            <person name="Fletcher C.F."/>
            <person name="Fukushima T."/>
            <person name="Furuno M."/>
            <person name="Futaki S."/>
            <person name="Gariboldi M."/>
            <person name="Georgii-Hemming P."/>
            <person name="Gingeras T.R."/>
            <person name="Gojobori T."/>
            <person name="Green R.E."/>
            <person name="Gustincich S."/>
            <person name="Harbers M."/>
            <person name="Hayashi Y."/>
            <person name="Hensch T.K."/>
            <person name="Hirokawa N."/>
            <person name="Hill D."/>
            <person name="Huminiecki L."/>
            <person name="Iacono M."/>
            <person name="Ikeo K."/>
            <person name="Iwama A."/>
            <person name="Ishikawa T."/>
            <person name="Jakt M."/>
            <person name="Kanapin A."/>
            <person name="Katoh M."/>
            <person name="Kawasawa Y."/>
            <person name="Kelso J."/>
            <person name="Kitamura H."/>
            <person name="Kitano H."/>
            <person name="Kollias G."/>
            <person name="Krishnan S.P."/>
            <person name="Kruger A."/>
            <person name="Kummerfeld S.K."/>
            <person name="Kurochkin I.V."/>
            <person name="Lareau L.F."/>
            <person name="Lazarevic D."/>
            <person name="Lipovich L."/>
            <person name="Liu J."/>
            <person name="Liuni S."/>
            <person name="McWilliam S."/>
            <person name="Madan Babu M."/>
            <person name="Madera M."/>
            <person name="Marchionni L."/>
            <person name="Matsuda H."/>
            <person name="Matsuzawa S."/>
            <person name="Miki H."/>
            <person name="Mignone F."/>
            <person name="Miyake S."/>
            <person name="Morris K."/>
            <person name="Mottagui-Tabar S."/>
            <person name="Mulder N."/>
            <person name="Nakano N."/>
            <person name="Nakauchi H."/>
            <person name="Ng P."/>
            <person name="Nilsson R."/>
            <person name="Nishiguchi S."/>
            <person name="Nishikawa S."/>
            <person name="Nori F."/>
            <person name="Ohara O."/>
            <person name="Okazaki Y."/>
            <person name="Orlando V."/>
            <person name="Pang K.C."/>
            <person name="Pavan W.J."/>
            <person name="Pavesi G."/>
            <person name="Pesole G."/>
            <person name="Petrovsky N."/>
            <person name="Piazza S."/>
            <person name="Reed J."/>
            <person name="Reid J.F."/>
            <person name="Ring B.Z."/>
            <person name="Ringwald M."/>
            <person name="Rost B."/>
            <person name="Ruan Y."/>
            <person name="Salzberg S.L."/>
            <person name="Sandelin A."/>
            <person name="Schneider C."/>
            <person name="Schoenbach C."/>
            <person name="Sekiguchi K."/>
            <person name="Semple C.A."/>
            <person name="Seno S."/>
            <person name="Sessa L."/>
            <person name="Sheng Y."/>
            <person name="Shibata Y."/>
            <person name="Shimada H."/>
            <person name="Shimada K."/>
            <person name="Silva D."/>
            <person name="Sinclair B."/>
            <person name="Sperling S."/>
            <person name="Stupka E."/>
            <person name="Sugiura K."/>
            <person name="Sultana R."/>
            <person name="Takenaka Y."/>
            <person name="Taki K."/>
            <person name="Tammoja K."/>
            <person name="Tan S.L."/>
            <person name="Tang S."/>
            <person name="Taylor M.S."/>
            <person name="Tegner J."/>
            <person name="Teichmann S.A."/>
            <person name="Ueda H.R."/>
            <person name="van Nimwegen E."/>
            <person name="Verardo R."/>
            <person name="Wei C.L."/>
            <person name="Yagi K."/>
            <person name="Yamanishi H."/>
            <person name="Zabarovsky E."/>
            <person name="Zhu S."/>
            <person name="Zimmer A."/>
            <person name="Hide W."/>
            <person name="Bult C."/>
            <person name="Grimmond S.M."/>
            <person name="Teasdale R.D."/>
            <person name="Liu E.T."/>
            <person name="Brusic V."/>
            <person name="Quackenbush J."/>
            <person name="Wahlestedt C."/>
            <person name="Mattick J.S."/>
            <person name="Hume D.A."/>
            <person name="Kai C."/>
            <person name="Sasaki D."/>
            <person name="Tomaru Y."/>
            <person name="Fukuda S."/>
            <person name="Kanamori-Katayama M."/>
            <person name="Suzuki M."/>
            <person name="Aoki J."/>
            <person name="Arakawa T."/>
            <person name="Iida J."/>
            <person name="Imamura K."/>
            <person name="Itoh M."/>
            <person name="Kato T."/>
            <person name="Kawaji H."/>
            <person name="Kawagashira N."/>
            <person name="Kawashima T."/>
            <person name="Kojima M."/>
            <person name="Kondo S."/>
            <person name="Konno H."/>
            <person name="Nakano K."/>
            <person name="Ninomiya N."/>
            <person name="Nishio T."/>
            <person name="Okada M."/>
            <person name="Plessy C."/>
            <person name="Shibata K."/>
            <person name="Shiraki T."/>
            <person name="Suzuki S."/>
            <person name="Tagami M."/>
            <person name="Waki K."/>
            <person name="Watahiki A."/>
            <person name="Okamura-Oho Y."/>
            <person name="Suzuki H."/>
            <person name="Kawai J."/>
            <person name="Hayashizaki Y."/>
        </authorList>
    </citation>
    <scope>NUCLEOTIDE SEQUENCE [LARGE SCALE MRNA]</scope>
    <source>
        <strain>C57BL/6J</strain>
        <tissue>Testis</tissue>
    </source>
</reference>
<reference key="2">
    <citation type="journal article" date="2004" name="Genome Res.">
        <title>The status, quality, and expansion of the NIH full-length cDNA project: the Mammalian Gene Collection (MGC).</title>
        <authorList>
            <consortium name="The MGC Project Team"/>
        </authorList>
    </citation>
    <scope>NUCLEOTIDE SEQUENCE [LARGE SCALE MRNA]</scope>
    <source>
        <strain>C57BL/6J</strain>
        <tissue>Brain</tissue>
    </source>
</reference>
<reference key="3">
    <citation type="journal article" date="2010" name="Cell">
        <title>A tissue-specific atlas of mouse protein phosphorylation and expression.</title>
        <authorList>
            <person name="Huttlin E.L."/>
            <person name="Jedrychowski M.P."/>
            <person name="Elias J.E."/>
            <person name="Goswami T."/>
            <person name="Rad R."/>
            <person name="Beausoleil S.A."/>
            <person name="Villen J."/>
            <person name="Haas W."/>
            <person name="Sowa M.E."/>
            <person name="Gygi S.P."/>
        </authorList>
    </citation>
    <scope>PHOSPHORYLATION [LARGE SCALE ANALYSIS] AT SER-259 AND SER-261</scope>
    <scope>IDENTIFICATION BY MASS SPECTROMETRY [LARGE SCALE ANALYSIS]</scope>
    <source>
        <tissue>Brain</tissue>
        <tissue>Testis</tissue>
    </source>
</reference>
<dbReference type="EMBL" id="AK029946">
    <property type="protein sequence ID" value="BAC26694.1"/>
    <property type="molecule type" value="mRNA"/>
</dbReference>
<dbReference type="EMBL" id="BC089008">
    <property type="protein sequence ID" value="AAH89008.1"/>
    <property type="molecule type" value="mRNA"/>
</dbReference>
<dbReference type="CCDS" id="CCDS23979.1"/>
<dbReference type="RefSeq" id="NP_001162095.1">
    <property type="nucleotide sequence ID" value="NM_001168624.1"/>
</dbReference>
<dbReference type="RefSeq" id="NP_941016.2">
    <property type="nucleotide sequence ID" value="NM_198614.3"/>
</dbReference>
<dbReference type="SMR" id="Q5HZI2"/>
<dbReference type="BioGRID" id="231872">
    <property type="interactions" value="1"/>
</dbReference>
<dbReference type="FunCoup" id="Q5HZI2">
    <property type="interactions" value="531"/>
</dbReference>
<dbReference type="STRING" id="10090.ENSMUSP00000059433"/>
<dbReference type="GlyGen" id="Q5HZI2">
    <property type="glycosylation" value="2 sites, 1 O-linked glycan (1 site)"/>
</dbReference>
<dbReference type="iPTMnet" id="Q5HZI2"/>
<dbReference type="PhosphoSitePlus" id="Q5HZI2"/>
<dbReference type="SwissPalm" id="Q5HZI2"/>
<dbReference type="PaxDb" id="10090-ENSMUSP00000059433"/>
<dbReference type="PeptideAtlas" id="Q5HZI2"/>
<dbReference type="ProteomicsDB" id="265463"/>
<dbReference type="Antibodypedia" id="59205">
    <property type="antibodies" value="17 antibodies from 5 providers"/>
</dbReference>
<dbReference type="DNASU" id="237397"/>
<dbReference type="Ensembl" id="ENSMUST00000059699.9">
    <property type="protein sequence ID" value="ENSMUSP00000059433.8"/>
    <property type="gene ID" value="ENSMUSG00000045912.10"/>
</dbReference>
<dbReference type="Ensembl" id="ENSMUST00000178228.3">
    <property type="protein sequence ID" value="ENSMUSP00000136013.2"/>
    <property type="gene ID" value="ENSMUSG00000045912.10"/>
</dbReference>
<dbReference type="GeneID" id="237397"/>
<dbReference type="KEGG" id="mmu:237397"/>
<dbReference type="UCSC" id="uc007fzb.2">
    <property type="organism name" value="mouse"/>
</dbReference>
<dbReference type="AGR" id="MGI:2685084"/>
<dbReference type="CTD" id="126567"/>
<dbReference type="MGI" id="MGI:2685084">
    <property type="gene designation" value="C2cd4c"/>
</dbReference>
<dbReference type="VEuPathDB" id="HostDB:ENSMUSG00000045912"/>
<dbReference type="eggNOG" id="ENOG502QT01">
    <property type="taxonomic scope" value="Eukaryota"/>
</dbReference>
<dbReference type="GeneTree" id="ENSGT00940000161259"/>
<dbReference type="HOGENOM" id="CLU_051964_0_0_1"/>
<dbReference type="InParanoid" id="Q5HZI2"/>
<dbReference type="OMA" id="DKHCDAR"/>
<dbReference type="OrthoDB" id="9947256at2759"/>
<dbReference type="PhylomeDB" id="Q5HZI2"/>
<dbReference type="TreeFam" id="TF330989"/>
<dbReference type="BioGRID-ORCS" id="237397">
    <property type="hits" value="1 hit in 79 CRISPR screens"/>
</dbReference>
<dbReference type="CD-CODE" id="CE726F99">
    <property type="entry name" value="Postsynaptic density"/>
</dbReference>
<dbReference type="PRO" id="PR:Q5HZI2"/>
<dbReference type="Proteomes" id="UP000000589">
    <property type="component" value="Chromosome 10"/>
</dbReference>
<dbReference type="RNAct" id="Q5HZI2">
    <property type="molecule type" value="protein"/>
</dbReference>
<dbReference type="Bgee" id="ENSMUSG00000045912">
    <property type="expression patterns" value="Expressed in dentate gyrus of hippocampal formation granule cell and 67 other cell types or tissues"/>
</dbReference>
<dbReference type="GO" id="GO:0005829">
    <property type="term" value="C:cytosol"/>
    <property type="evidence" value="ECO:0000314"/>
    <property type="project" value="MGI"/>
</dbReference>
<dbReference type="CDD" id="cd00030">
    <property type="entry name" value="C2"/>
    <property type="match status" value="1"/>
</dbReference>
<dbReference type="FunFam" id="2.60.40.150:FF:000172">
    <property type="entry name" value="C2 calcium-dependent domain-containing protein 4C"/>
    <property type="match status" value="1"/>
</dbReference>
<dbReference type="Gene3D" id="2.60.40.150">
    <property type="entry name" value="C2 domain"/>
    <property type="match status" value="1"/>
</dbReference>
<dbReference type="InterPro" id="IPR000008">
    <property type="entry name" value="C2_dom"/>
</dbReference>
<dbReference type="InterPro" id="IPR035892">
    <property type="entry name" value="C2_domain_sf"/>
</dbReference>
<dbReference type="InterPro" id="IPR043549">
    <property type="entry name" value="C2C4C/C2C4D"/>
</dbReference>
<dbReference type="PANTHER" id="PTHR46291:SF5">
    <property type="entry name" value="C2 CALCIUM-DEPENDENT DOMAIN-CONTAINING PROTEIN 4C"/>
    <property type="match status" value="1"/>
</dbReference>
<dbReference type="PANTHER" id="PTHR46291">
    <property type="entry name" value="C2 DOMAIN-CONTAINING PROTEIN"/>
    <property type="match status" value="1"/>
</dbReference>
<dbReference type="Pfam" id="PF00168">
    <property type="entry name" value="C2"/>
    <property type="match status" value="1"/>
</dbReference>
<dbReference type="SMART" id="SM00239">
    <property type="entry name" value="C2"/>
    <property type="match status" value="1"/>
</dbReference>
<dbReference type="SUPFAM" id="SSF49562">
    <property type="entry name" value="C2 domain (Calcium/lipid-binding domain, CaLB)"/>
    <property type="match status" value="1"/>
</dbReference>
<dbReference type="PROSITE" id="PS50004">
    <property type="entry name" value="C2"/>
    <property type="match status" value="1"/>
</dbReference>
<evidence type="ECO:0000250" key="1">
    <source>
        <dbReference type="UniProtKB" id="Q8TF44"/>
    </source>
</evidence>
<evidence type="ECO:0000255" key="2">
    <source>
        <dbReference type="PROSITE-ProRule" id="PRU00041"/>
    </source>
</evidence>
<evidence type="ECO:0000256" key="3">
    <source>
        <dbReference type="SAM" id="MobiDB-lite"/>
    </source>
</evidence>
<evidence type="ECO:0000305" key="4"/>
<evidence type="ECO:0007744" key="5">
    <source>
    </source>
</evidence>
<organism>
    <name type="scientific">Mus musculus</name>
    <name type="common">Mouse</name>
    <dbReference type="NCBI Taxonomy" id="10090"/>
    <lineage>
        <taxon>Eukaryota</taxon>
        <taxon>Metazoa</taxon>
        <taxon>Chordata</taxon>
        <taxon>Craniata</taxon>
        <taxon>Vertebrata</taxon>
        <taxon>Euteleostomi</taxon>
        <taxon>Mammalia</taxon>
        <taxon>Eutheria</taxon>
        <taxon>Euarchontoglires</taxon>
        <taxon>Glires</taxon>
        <taxon>Rodentia</taxon>
        <taxon>Myomorpha</taxon>
        <taxon>Muroidea</taxon>
        <taxon>Muridae</taxon>
        <taxon>Murinae</taxon>
        <taxon>Mus</taxon>
        <taxon>Mus</taxon>
    </lineage>
</organism>
<feature type="chain" id="PRO_0000293735" description="C2 calcium-dependent domain-containing protein 4C">
    <location>
        <begin position="1"/>
        <end position="419"/>
    </location>
</feature>
<feature type="domain" description="C2" evidence="2">
    <location>
        <begin position="303"/>
        <end position="419"/>
    </location>
</feature>
<feature type="region of interest" description="Disordered" evidence="3">
    <location>
        <begin position="1"/>
        <end position="96"/>
    </location>
</feature>
<feature type="region of interest" description="Disordered" evidence="3">
    <location>
        <begin position="115"/>
        <end position="136"/>
    </location>
</feature>
<feature type="region of interest" description="Disordered" evidence="3">
    <location>
        <begin position="151"/>
        <end position="225"/>
    </location>
</feature>
<feature type="region of interest" description="Disordered" evidence="3">
    <location>
        <begin position="247"/>
        <end position="300"/>
    </location>
</feature>
<feature type="compositionally biased region" description="Low complexity" evidence="3">
    <location>
        <begin position="75"/>
        <end position="94"/>
    </location>
</feature>
<feature type="compositionally biased region" description="Gly residues" evidence="3">
    <location>
        <begin position="186"/>
        <end position="196"/>
    </location>
</feature>
<feature type="compositionally biased region" description="Polar residues" evidence="3">
    <location>
        <begin position="212"/>
        <end position="225"/>
    </location>
</feature>
<feature type="modified residue" description="Phosphoserine" evidence="5">
    <location>
        <position position="259"/>
    </location>
</feature>
<feature type="modified residue" description="Phosphoserine" evidence="5">
    <location>
        <position position="261"/>
    </location>
</feature>
<feature type="modified residue" description="Phosphoserine" evidence="1">
    <location>
        <position position="270"/>
    </location>
</feature>
<feature type="sequence conflict" description="In Ref. 1; BAC26694." evidence="4" ref="1">
    <original>E</original>
    <variation>D</variation>
    <location>
        <position position="120"/>
    </location>
</feature>
<feature type="sequence conflict" description="In Ref. 1; BAC26694." evidence="4" ref="1">
    <original>P</original>
    <variation>H</variation>
    <location>
        <position position="139"/>
    </location>
</feature>
<protein>
    <recommendedName>
        <fullName>C2 calcium-dependent domain-containing protein 4C</fullName>
    </recommendedName>
    <alternativeName>
        <fullName>Nuclear-localized factor 3</fullName>
    </alternativeName>
    <alternativeName>
        <fullName>Protein FAM148C</fullName>
    </alternativeName>
</protein>
<keyword id="KW-0597">Phosphoprotein</keyword>
<keyword id="KW-1185">Reference proteome</keyword>
<name>C2C4C_MOUSE</name>
<accession>Q5HZI2</accession>
<accession>Q8CDK0</accession>
<comment type="similarity">
    <text evidence="4">Belongs to the C2CD4 family.</text>
</comment>
<gene>
    <name type="primary">C2cd4c</name>
    <name type="synonym">Fam148c</name>
    <name type="synonym">Nlf3</name>
</gene>
<sequence length="419" mass="44614">MRKTNMWFLERLRGSGENGASRGEAGDKSSKGPLYSNVLTPDKIPDFFIPPKLPSGPTEAEGQADLGPSTSEQNLASPGPRRAPRSPRLPAKLASESRSLLKAATRHVIQIESAEDWTAEEATNADPQAQGAMSLPSVPKAQTSYGFATLAESPHTRRKESLFHSEHGALAQVGSPGAGRRRAGAKGNGGDGGSREVGGALMSPSRYFSGGESDTGSSAESSPFGSPLLSRSVSLLKGFAQDSQAKVSQLKQSVGRHGSLSADDSTPDTSPGVRRRLSRRATPEPGPESGQAPRGEHTVKMGTRGSVRLLAEYEAAQARLRVRLLAAEGLYDRPCDARSINCCVGLCLVPGKLQKQRSTIIKNSRHPIFNEDFFFDGLGPASVRKLALRIKVVNKGSSLKRDTLLGEEELPLTSLLPFL</sequence>